<proteinExistence type="inferred from homology"/>
<name>PTPA1_NEUCR</name>
<organism>
    <name type="scientific">Neurospora crassa (strain ATCC 24698 / 74-OR23-1A / CBS 708.71 / DSM 1257 / FGSC 987)</name>
    <dbReference type="NCBI Taxonomy" id="367110"/>
    <lineage>
        <taxon>Eukaryota</taxon>
        <taxon>Fungi</taxon>
        <taxon>Dikarya</taxon>
        <taxon>Ascomycota</taxon>
        <taxon>Pezizomycotina</taxon>
        <taxon>Sordariomycetes</taxon>
        <taxon>Sordariomycetidae</taxon>
        <taxon>Sordariales</taxon>
        <taxon>Sordariaceae</taxon>
        <taxon>Neurospora</taxon>
    </lineage>
</organism>
<protein>
    <recommendedName>
        <fullName>Serine/threonine-protein phosphatase 2A activator 1</fullName>
        <ecNumber>5.2.1.8</ecNumber>
    </recommendedName>
    <alternativeName>
        <fullName>Peptidyl-prolyl cis-trans isomerase PTPA-1</fullName>
        <shortName>PPIase PTPA-1</shortName>
        <shortName>Rotamase PTPA-1</shortName>
    </alternativeName>
    <alternativeName>
        <fullName>Phosphotyrosyl phosphatase activator 1</fullName>
    </alternativeName>
</protein>
<accession>Q7S6M5</accession>
<evidence type="ECO:0000250" key="1"/>
<evidence type="ECO:0000256" key="2">
    <source>
        <dbReference type="SAM" id="MobiDB-lite"/>
    </source>
</evidence>
<evidence type="ECO:0000305" key="3"/>
<reference key="1">
    <citation type="journal article" date="2003" name="Nature">
        <title>The genome sequence of the filamentous fungus Neurospora crassa.</title>
        <authorList>
            <person name="Galagan J.E."/>
            <person name="Calvo S.E."/>
            <person name="Borkovich K.A."/>
            <person name="Selker E.U."/>
            <person name="Read N.D."/>
            <person name="Jaffe D.B."/>
            <person name="FitzHugh W."/>
            <person name="Ma L.-J."/>
            <person name="Smirnov S."/>
            <person name="Purcell S."/>
            <person name="Rehman B."/>
            <person name="Elkins T."/>
            <person name="Engels R."/>
            <person name="Wang S."/>
            <person name="Nielsen C.B."/>
            <person name="Butler J."/>
            <person name="Endrizzi M."/>
            <person name="Qui D."/>
            <person name="Ianakiev P."/>
            <person name="Bell-Pedersen D."/>
            <person name="Nelson M.A."/>
            <person name="Werner-Washburne M."/>
            <person name="Selitrennikoff C.P."/>
            <person name="Kinsey J.A."/>
            <person name="Braun E.L."/>
            <person name="Zelter A."/>
            <person name="Schulte U."/>
            <person name="Kothe G.O."/>
            <person name="Jedd G."/>
            <person name="Mewes H.-W."/>
            <person name="Staben C."/>
            <person name="Marcotte E."/>
            <person name="Greenberg D."/>
            <person name="Roy A."/>
            <person name="Foley K."/>
            <person name="Naylor J."/>
            <person name="Stange-Thomann N."/>
            <person name="Barrett R."/>
            <person name="Gnerre S."/>
            <person name="Kamal M."/>
            <person name="Kamvysselis M."/>
            <person name="Mauceli E.W."/>
            <person name="Bielke C."/>
            <person name="Rudd S."/>
            <person name="Frishman D."/>
            <person name="Krystofova S."/>
            <person name="Rasmussen C."/>
            <person name="Metzenberg R.L."/>
            <person name="Perkins D.D."/>
            <person name="Kroken S."/>
            <person name="Cogoni C."/>
            <person name="Macino G."/>
            <person name="Catcheside D.E.A."/>
            <person name="Li W."/>
            <person name="Pratt R.J."/>
            <person name="Osmani S.A."/>
            <person name="DeSouza C.P.C."/>
            <person name="Glass N.L."/>
            <person name="Orbach M.J."/>
            <person name="Berglund J.A."/>
            <person name="Voelker R."/>
            <person name="Yarden O."/>
            <person name="Plamann M."/>
            <person name="Seiler S."/>
            <person name="Dunlap J.C."/>
            <person name="Radford A."/>
            <person name="Aramayo R."/>
            <person name="Natvig D.O."/>
            <person name="Alex L.A."/>
            <person name="Mannhaupt G."/>
            <person name="Ebbole D.J."/>
            <person name="Freitag M."/>
            <person name="Paulsen I."/>
            <person name="Sachs M.S."/>
            <person name="Lander E.S."/>
            <person name="Nusbaum C."/>
            <person name="Birren B.W."/>
        </authorList>
    </citation>
    <scope>NUCLEOTIDE SEQUENCE [LARGE SCALE GENOMIC DNA]</scope>
    <source>
        <strain>ATCC 24698 / 74-OR23-1A / CBS 708.71 / DSM 1257 / FGSC 987</strain>
    </source>
</reference>
<dbReference type="EC" id="5.2.1.8"/>
<dbReference type="EMBL" id="CM002241">
    <property type="protein sequence ID" value="EAA31200.1"/>
    <property type="molecule type" value="Genomic_DNA"/>
</dbReference>
<dbReference type="RefSeq" id="XP_960436.1">
    <property type="nucleotide sequence ID" value="XM_955343.2"/>
</dbReference>
<dbReference type="SMR" id="Q7S6M5"/>
<dbReference type="STRING" id="367110.Q7S6M5"/>
<dbReference type="PaxDb" id="5141-EFNCRP00000004489"/>
<dbReference type="EnsemblFungi" id="EAA31200">
    <property type="protein sequence ID" value="EAA31200"/>
    <property type="gene ID" value="NCU04810"/>
</dbReference>
<dbReference type="GeneID" id="3876574"/>
<dbReference type="KEGG" id="ncr:NCU04810"/>
<dbReference type="VEuPathDB" id="FungiDB:NCU04810"/>
<dbReference type="HOGENOM" id="CLU_030733_2_0_1"/>
<dbReference type="InParanoid" id="Q7S6M5"/>
<dbReference type="OMA" id="IHESQDV"/>
<dbReference type="OrthoDB" id="16120at2759"/>
<dbReference type="Proteomes" id="UP000001805">
    <property type="component" value="Chromosome 5, Linkage Group VI"/>
</dbReference>
<dbReference type="GO" id="GO:0005737">
    <property type="term" value="C:cytoplasm"/>
    <property type="evidence" value="ECO:0000318"/>
    <property type="project" value="GO_Central"/>
</dbReference>
<dbReference type="GO" id="GO:0005634">
    <property type="term" value="C:nucleus"/>
    <property type="evidence" value="ECO:0000318"/>
    <property type="project" value="GO_Central"/>
</dbReference>
<dbReference type="GO" id="GO:0000159">
    <property type="term" value="C:protein phosphatase type 2A complex"/>
    <property type="evidence" value="ECO:0000318"/>
    <property type="project" value="GO_Central"/>
</dbReference>
<dbReference type="GO" id="GO:0003755">
    <property type="term" value="F:peptidyl-prolyl cis-trans isomerase activity"/>
    <property type="evidence" value="ECO:0000318"/>
    <property type="project" value="GO_Central"/>
</dbReference>
<dbReference type="GO" id="GO:0008160">
    <property type="term" value="F:protein tyrosine phosphatase activator activity"/>
    <property type="evidence" value="ECO:0000318"/>
    <property type="project" value="GO_Central"/>
</dbReference>
<dbReference type="GO" id="GO:0007052">
    <property type="term" value="P:mitotic spindle organization"/>
    <property type="evidence" value="ECO:0000318"/>
    <property type="project" value="GO_Central"/>
</dbReference>
<dbReference type="CDD" id="cd04087">
    <property type="entry name" value="PTPA"/>
    <property type="match status" value="1"/>
</dbReference>
<dbReference type="FunFam" id="1.20.120.1150:FF:000003">
    <property type="entry name" value="Serine/threonine-protein phosphatase 2A activator"/>
    <property type="match status" value="1"/>
</dbReference>
<dbReference type="Gene3D" id="1.20.120.1150">
    <property type="match status" value="1"/>
</dbReference>
<dbReference type="InterPro" id="IPR004327">
    <property type="entry name" value="Phstyr_phstse_ac"/>
</dbReference>
<dbReference type="InterPro" id="IPR043170">
    <property type="entry name" value="PTPA_C_lid"/>
</dbReference>
<dbReference type="InterPro" id="IPR037218">
    <property type="entry name" value="PTPA_sf"/>
</dbReference>
<dbReference type="PANTHER" id="PTHR10012">
    <property type="entry name" value="SERINE/THREONINE-PROTEIN PHOSPHATASE 2A REGULATORY SUBUNIT B"/>
    <property type="match status" value="1"/>
</dbReference>
<dbReference type="PANTHER" id="PTHR10012:SF3">
    <property type="entry name" value="SERINE_THREONINE-PROTEIN PHOSPHATASE 2A ACTIVATOR 1"/>
    <property type="match status" value="1"/>
</dbReference>
<dbReference type="Pfam" id="PF03095">
    <property type="entry name" value="PTPA"/>
    <property type="match status" value="1"/>
</dbReference>
<dbReference type="SUPFAM" id="SSF140984">
    <property type="entry name" value="PTPA-like"/>
    <property type="match status" value="1"/>
</dbReference>
<sequence length="617" mass="67073">MDPTSKRPPPAASSSTTYPPLPKLEILNPSALPSHRFLRPAKRINEGPDVSHFLTSKAYRDIGVWILQLNHALVPRIIKKSTTVSTSEPTTDGQQQQQQQQQRQQKAEEVDEQQQPPPPPPTDALAAKLQLLRKKRDEQQPTTTEEIKTFPLPRYRDGEGVENQEESESIKKLQRLLKKVEAIIDEAPPDPGPRRFGNVSFRTWFKLLEERADGLLREYLPGGVLRWEQGAGGEKKEEEEGTETETETETEGDSDKKTNEQKQEVVGPLEELKAYFLGGFGSAQRLDYGTGHELSFIMFLGGLWKLGGFEGEENDEDGEVERRIVLGVVEPYLRVIRRLILTYTLEPAGSHGVWGLDDHSFVPYIFGSAQYTRPISSPNEPTPLEGSVPNAPKPSDITKPTAVERYRTENMYFSAIGFIYDVKKGPFWEHSPILFDVSGIKDGWGKINKGMIKMYNAEVLSKFPVVQHFPFGSLFQWEKDPEAGVPVQSVHMQNQPVASAAVTGGVGIPTERPSGPGGVTGTAAPWAQAPAQAPAAGIGAGAGMAPPMTAAPWARSTGAGAGAGVGASAANRFTPFKPAGGPGGAPHTGPPPPESFPSGTPGTASNQFAVTKAPWTK</sequence>
<gene>
    <name type="primary">rrd-1</name>
    <name type="ORF">NCU04810</name>
</gene>
<feature type="chain" id="PRO_0000226102" description="Serine/threonine-protein phosphatase 2A activator 1">
    <location>
        <begin position="1"/>
        <end position="617"/>
    </location>
</feature>
<feature type="region of interest" description="Disordered" evidence="2">
    <location>
        <begin position="1"/>
        <end position="25"/>
    </location>
</feature>
<feature type="region of interest" description="Disordered" evidence="2">
    <location>
        <begin position="84"/>
        <end position="169"/>
    </location>
</feature>
<feature type="region of interest" description="Disordered" evidence="2">
    <location>
        <begin position="230"/>
        <end position="261"/>
    </location>
</feature>
<feature type="region of interest" description="Disordered" evidence="2">
    <location>
        <begin position="376"/>
        <end position="398"/>
    </location>
</feature>
<feature type="region of interest" description="Disordered" evidence="2">
    <location>
        <begin position="572"/>
        <end position="617"/>
    </location>
</feature>
<feature type="compositionally biased region" description="Pro residues" evidence="2">
    <location>
        <begin position="1"/>
        <end position="11"/>
    </location>
</feature>
<feature type="compositionally biased region" description="Polar residues" evidence="2">
    <location>
        <begin position="84"/>
        <end position="93"/>
    </location>
</feature>
<feature type="compositionally biased region" description="Low complexity" evidence="2">
    <location>
        <begin position="94"/>
        <end position="104"/>
    </location>
</feature>
<feature type="compositionally biased region" description="Acidic residues" evidence="2">
    <location>
        <begin position="239"/>
        <end position="252"/>
    </location>
</feature>
<keyword id="KW-0963">Cytoplasm</keyword>
<keyword id="KW-0413">Isomerase</keyword>
<keyword id="KW-0539">Nucleus</keyword>
<keyword id="KW-1185">Reference proteome</keyword>
<keyword id="KW-0697">Rotamase</keyword>
<comment type="function">
    <text evidence="1">PPIases accelerate the folding of proteins. It catalyzes the cis-trans isomerization of proline imidic peptide bonds in oligopeptides. Acts as a regulatory subunit for PP2A-like phosphatases modulating their activity or substrate specificity, probably by inducing a conformational change in the catalytic subunit, a direct target of the PPIase. Can reactivate inactive phosphatase PP2A-phosphatase methylesterase complexes (PP2Ai) in presence of ATP and Mg(2+) by dissociating the inactive form from the complex (By similarity).</text>
</comment>
<comment type="catalytic activity">
    <reaction>
        <text>[protein]-peptidylproline (omega=180) = [protein]-peptidylproline (omega=0)</text>
        <dbReference type="Rhea" id="RHEA:16237"/>
        <dbReference type="Rhea" id="RHEA-COMP:10747"/>
        <dbReference type="Rhea" id="RHEA-COMP:10748"/>
        <dbReference type="ChEBI" id="CHEBI:83833"/>
        <dbReference type="ChEBI" id="CHEBI:83834"/>
        <dbReference type="EC" id="5.2.1.8"/>
    </reaction>
</comment>
<comment type="subcellular location">
    <subcellularLocation>
        <location evidence="1">Cytoplasm</location>
    </subcellularLocation>
    <subcellularLocation>
        <location evidence="1">Nucleus</location>
    </subcellularLocation>
</comment>
<comment type="similarity">
    <text evidence="3">Belongs to the PTPA-type PPIase family.</text>
</comment>